<name>RPOZ_XYLFA</name>
<proteinExistence type="inferred from homology"/>
<reference key="1">
    <citation type="journal article" date="2000" name="Nature">
        <title>The genome sequence of the plant pathogen Xylella fastidiosa.</title>
        <authorList>
            <person name="Simpson A.J.G."/>
            <person name="Reinach F.C."/>
            <person name="Arruda P."/>
            <person name="Abreu F.A."/>
            <person name="Acencio M."/>
            <person name="Alvarenga R."/>
            <person name="Alves L.M.C."/>
            <person name="Araya J.E."/>
            <person name="Baia G.S."/>
            <person name="Baptista C.S."/>
            <person name="Barros M.H."/>
            <person name="Bonaccorsi E.D."/>
            <person name="Bordin S."/>
            <person name="Bove J.M."/>
            <person name="Briones M.R.S."/>
            <person name="Bueno M.R.P."/>
            <person name="Camargo A.A."/>
            <person name="Camargo L.E.A."/>
            <person name="Carraro D.M."/>
            <person name="Carrer H."/>
            <person name="Colauto N.B."/>
            <person name="Colombo C."/>
            <person name="Costa F.F."/>
            <person name="Costa M.C.R."/>
            <person name="Costa-Neto C.M."/>
            <person name="Coutinho L.L."/>
            <person name="Cristofani M."/>
            <person name="Dias-Neto E."/>
            <person name="Docena C."/>
            <person name="El-Dorry H."/>
            <person name="Facincani A.P."/>
            <person name="Ferreira A.J.S."/>
            <person name="Ferreira V.C.A."/>
            <person name="Ferro J.A."/>
            <person name="Fraga J.S."/>
            <person name="Franca S.C."/>
            <person name="Franco M.C."/>
            <person name="Frohme M."/>
            <person name="Furlan L.R."/>
            <person name="Garnier M."/>
            <person name="Goldman G.H."/>
            <person name="Goldman M.H.S."/>
            <person name="Gomes S.L."/>
            <person name="Gruber A."/>
            <person name="Ho P.L."/>
            <person name="Hoheisel J.D."/>
            <person name="Junqueira M.L."/>
            <person name="Kemper E.L."/>
            <person name="Kitajima J.P."/>
            <person name="Krieger J.E."/>
            <person name="Kuramae E.E."/>
            <person name="Laigret F."/>
            <person name="Lambais M.R."/>
            <person name="Leite L.C.C."/>
            <person name="Lemos E.G.M."/>
            <person name="Lemos M.V.F."/>
            <person name="Lopes S.A."/>
            <person name="Lopes C.R."/>
            <person name="Machado J.A."/>
            <person name="Machado M.A."/>
            <person name="Madeira A.M.B.N."/>
            <person name="Madeira H.M.F."/>
            <person name="Marino C.L."/>
            <person name="Marques M.V."/>
            <person name="Martins E.A.L."/>
            <person name="Martins E.M.F."/>
            <person name="Matsukuma A.Y."/>
            <person name="Menck C.F.M."/>
            <person name="Miracca E.C."/>
            <person name="Miyaki C.Y."/>
            <person name="Monteiro-Vitorello C.B."/>
            <person name="Moon D.H."/>
            <person name="Nagai M.A."/>
            <person name="Nascimento A.L.T.O."/>
            <person name="Netto L.E.S."/>
            <person name="Nhani A. Jr."/>
            <person name="Nobrega F.G."/>
            <person name="Nunes L.R."/>
            <person name="Oliveira M.A."/>
            <person name="de Oliveira M.C."/>
            <person name="de Oliveira R.C."/>
            <person name="Palmieri D.A."/>
            <person name="Paris A."/>
            <person name="Peixoto B.R."/>
            <person name="Pereira G.A.G."/>
            <person name="Pereira H.A. Jr."/>
            <person name="Pesquero J.B."/>
            <person name="Quaggio R.B."/>
            <person name="Roberto P.G."/>
            <person name="Rodrigues V."/>
            <person name="de Rosa A.J.M."/>
            <person name="de Rosa V.E. Jr."/>
            <person name="de Sa R.G."/>
            <person name="Santelli R.V."/>
            <person name="Sawasaki H.E."/>
            <person name="da Silva A.C.R."/>
            <person name="da Silva A.M."/>
            <person name="da Silva F.R."/>
            <person name="Silva W.A. Jr."/>
            <person name="da Silveira J.F."/>
            <person name="Silvestri M.L.Z."/>
            <person name="Siqueira W.J."/>
            <person name="de Souza A.A."/>
            <person name="de Souza A.P."/>
            <person name="Terenzi M.F."/>
            <person name="Truffi D."/>
            <person name="Tsai S.M."/>
            <person name="Tsuhako M.H."/>
            <person name="Vallada H."/>
            <person name="Van Sluys M.A."/>
            <person name="Verjovski-Almeida S."/>
            <person name="Vettore A.L."/>
            <person name="Zago M.A."/>
            <person name="Zatz M."/>
            <person name="Meidanis J."/>
            <person name="Setubal J.C."/>
        </authorList>
    </citation>
    <scope>NUCLEOTIDE SEQUENCE [LARGE SCALE GENOMIC DNA]</scope>
    <source>
        <strain>9a5c</strain>
    </source>
</reference>
<protein>
    <recommendedName>
        <fullName>DNA-directed RNA polymerase subunit omega</fullName>
        <shortName>RNAP omega subunit</shortName>
        <ecNumber>2.7.7.6</ecNumber>
    </recommendedName>
    <alternativeName>
        <fullName>RNA polymerase omega subunit</fullName>
    </alternativeName>
    <alternativeName>
        <fullName>Transcriptase subunit omega</fullName>
    </alternativeName>
</protein>
<organism>
    <name type="scientific">Xylella fastidiosa (strain 9a5c)</name>
    <dbReference type="NCBI Taxonomy" id="160492"/>
    <lineage>
        <taxon>Bacteria</taxon>
        <taxon>Pseudomonadati</taxon>
        <taxon>Pseudomonadota</taxon>
        <taxon>Gammaproteobacteria</taxon>
        <taxon>Lysobacterales</taxon>
        <taxon>Lysobacteraceae</taxon>
        <taxon>Xylella</taxon>
    </lineage>
</organism>
<comment type="function">
    <text evidence="1">Promotes RNA polymerase assembly. Latches the N- and C-terminal regions of the beta' subunit thereby facilitating its interaction with the beta and alpha subunits (By similarity).</text>
</comment>
<comment type="catalytic activity">
    <reaction>
        <text>RNA(n) + a ribonucleoside 5'-triphosphate = RNA(n+1) + diphosphate</text>
        <dbReference type="Rhea" id="RHEA:21248"/>
        <dbReference type="Rhea" id="RHEA-COMP:14527"/>
        <dbReference type="Rhea" id="RHEA-COMP:17342"/>
        <dbReference type="ChEBI" id="CHEBI:33019"/>
        <dbReference type="ChEBI" id="CHEBI:61557"/>
        <dbReference type="ChEBI" id="CHEBI:140395"/>
        <dbReference type="EC" id="2.7.7.6"/>
    </reaction>
</comment>
<comment type="subunit">
    <text evidence="1">The RNAP catalytic core consists of 2 alpha, 1 beta, 1 beta' and 1 omega subunit. When a sigma factor is associated with the core the holoenzyme is formed, which can initiate transcription (By similarity).</text>
</comment>
<comment type="similarity">
    <text evidence="2">Belongs to the RNA polymerase subunit omega family.</text>
</comment>
<sequence>MARITVEDCLEVVNNRFELVMMASKRARQLANGVPPLIENTNSEDKPTVLALREIAARKIDSKMIDEIEKAERERTEREAMEWAAAEVVADEDMSKSDD</sequence>
<gene>
    <name type="primary">rpoZ</name>
    <name type="ordered locus">XF_1502</name>
</gene>
<dbReference type="EC" id="2.7.7.6"/>
<dbReference type="EMBL" id="AE003849">
    <property type="protein sequence ID" value="AAF84311.1"/>
    <property type="molecule type" value="Genomic_DNA"/>
</dbReference>
<dbReference type="PIR" id="H82672">
    <property type="entry name" value="H82672"/>
</dbReference>
<dbReference type="RefSeq" id="WP_010894003.1">
    <property type="nucleotide sequence ID" value="NC_002488.3"/>
</dbReference>
<dbReference type="SMR" id="Q9PD77"/>
<dbReference type="STRING" id="160492.XF_1502"/>
<dbReference type="KEGG" id="xfa:XF_1502"/>
<dbReference type="eggNOG" id="COG1758">
    <property type="taxonomic scope" value="Bacteria"/>
</dbReference>
<dbReference type="HOGENOM" id="CLU_125406_5_3_6"/>
<dbReference type="Proteomes" id="UP000000812">
    <property type="component" value="Chromosome"/>
</dbReference>
<dbReference type="GO" id="GO:0000428">
    <property type="term" value="C:DNA-directed RNA polymerase complex"/>
    <property type="evidence" value="ECO:0007669"/>
    <property type="project" value="UniProtKB-KW"/>
</dbReference>
<dbReference type="GO" id="GO:0003677">
    <property type="term" value="F:DNA binding"/>
    <property type="evidence" value="ECO:0007669"/>
    <property type="project" value="UniProtKB-UniRule"/>
</dbReference>
<dbReference type="GO" id="GO:0003899">
    <property type="term" value="F:DNA-directed RNA polymerase activity"/>
    <property type="evidence" value="ECO:0007669"/>
    <property type="project" value="UniProtKB-UniRule"/>
</dbReference>
<dbReference type="GO" id="GO:0006351">
    <property type="term" value="P:DNA-templated transcription"/>
    <property type="evidence" value="ECO:0007669"/>
    <property type="project" value="UniProtKB-UniRule"/>
</dbReference>
<dbReference type="Gene3D" id="3.90.940.10">
    <property type="match status" value="1"/>
</dbReference>
<dbReference type="HAMAP" id="MF_00366">
    <property type="entry name" value="RNApol_bact_RpoZ"/>
    <property type="match status" value="1"/>
</dbReference>
<dbReference type="InterPro" id="IPR003716">
    <property type="entry name" value="DNA-dir_RNA_pol_omega"/>
</dbReference>
<dbReference type="InterPro" id="IPR006110">
    <property type="entry name" value="Pol_omega/Rpo6/RPB6"/>
</dbReference>
<dbReference type="InterPro" id="IPR036161">
    <property type="entry name" value="RPB6/omega-like_sf"/>
</dbReference>
<dbReference type="NCBIfam" id="TIGR00690">
    <property type="entry name" value="rpoZ"/>
    <property type="match status" value="1"/>
</dbReference>
<dbReference type="PANTHER" id="PTHR34476">
    <property type="entry name" value="DNA-DIRECTED RNA POLYMERASE SUBUNIT OMEGA"/>
    <property type="match status" value="1"/>
</dbReference>
<dbReference type="PANTHER" id="PTHR34476:SF1">
    <property type="entry name" value="DNA-DIRECTED RNA POLYMERASE SUBUNIT OMEGA"/>
    <property type="match status" value="1"/>
</dbReference>
<dbReference type="Pfam" id="PF01192">
    <property type="entry name" value="RNA_pol_Rpb6"/>
    <property type="match status" value="1"/>
</dbReference>
<dbReference type="SMART" id="SM01409">
    <property type="entry name" value="RNA_pol_Rpb6"/>
    <property type="match status" value="1"/>
</dbReference>
<dbReference type="SUPFAM" id="SSF63562">
    <property type="entry name" value="RPB6/omega subunit-like"/>
    <property type="match status" value="1"/>
</dbReference>
<accession>Q9PD77</accession>
<evidence type="ECO:0000250" key="1"/>
<evidence type="ECO:0000305" key="2"/>
<keyword id="KW-0240">DNA-directed RNA polymerase</keyword>
<keyword id="KW-0548">Nucleotidyltransferase</keyword>
<keyword id="KW-0804">Transcription</keyword>
<keyword id="KW-0808">Transferase</keyword>
<feature type="chain" id="PRO_0000129017" description="DNA-directed RNA polymerase subunit omega">
    <location>
        <begin position="1"/>
        <end position="99"/>
    </location>
</feature>